<keyword id="KW-0997">Cell inner membrane</keyword>
<keyword id="KW-1003">Cell membrane</keyword>
<keyword id="KW-0143">Chaperone</keyword>
<keyword id="KW-0472">Membrane</keyword>
<keyword id="KW-0653">Protein transport</keyword>
<keyword id="KW-0812">Transmembrane</keyword>
<keyword id="KW-1133">Transmembrane helix</keyword>
<keyword id="KW-0813">Transport</keyword>
<feature type="chain" id="PRO_0000124771" description="Membrane protein insertase YidC">
    <location>
        <begin position="1"/>
        <end position="574"/>
    </location>
</feature>
<feature type="transmembrane region" description="Helical" evidence="1">
    <location>
        <begin position="6"/>
        <end position="26"/>
    </location>
</feature>
<feature type="transmembrane region" description="Helical" evidence="1">
    <location>
        <begin position="356"/>
        <end position="376"/>
    </location>
</feature>
<feature type="transmembrane region" description="Helical" evidence="1">
    <location>
        <begin position="380"/>
        <end position="400"/>
    </location>
</feature>
<feature type="transmembrane region" description="Helical" evidence="1">
    <location>
        <begin position="447"/>
        <end position="467"/>
    </location>
</feature>
<feature type="transmembrane region" description="Helical" evidence="1">
    <location>
        <begin position="489"/>
        <end position="509"/>
    </location>
</feature>
<feature type="transmembrane region" description="Helical" evidence="1">
    <location>
        <begin position="525"/>
        <end position="545"/>
    </location>
</feature>
<dbReference type="EMBL" id="AE008923">
    <property type="protein sequence ID" value="AAM39202.1"/>
    <property type="molecule type" value="Genomic_DNA"/>
</dbReference>
<dbReference type="RefSeq" id="WP_005921867.1">
    <property type="nucleotide sequence ID" value="NC_003919.1"/>
</dbReference>
<dbReference type="SMR" id="Q8PEH7"/>
<dbReference type="DNASU" id="1158443"/>
<dbReference type="GeneID" id="66913343"/>
<dbReference type="KEGG" id="xac:XAC4372"/>
<dbReference type="eggNOG" id="COG0706">
    <property type="taxonomic scope" value="Bacteria"/>
</dbReference>
<dbReference type="HOGENOM" id="CLU_016535_3_0_6"/>
<dbReference type="Proteomes" id="UP000000576">
    <property type="component" value="Chromosome"/>
</dbReference>
<dbReference type="GO" id="GO:0005886">
    <property type="term" value="C:plasma membrane"/>
    <property type="evidence" value="ECO:0007669"/>
    <property type="project" value="UniProtKB-SubCell"/>
</dbReference>
<dbReference type="GO" id="GO:0032977">
    <property type="term" value="F:membrane insertase activity"/>
    <property type="evidence" value="ECO:0007669"/>
    <property type="project" value="InterPro"/>
</dbReference>
<dbReference type="GO" id="GO:0051205">
    <property type="term" value="P:protein insertion into membrane"/>
    <property type="evidence" value="ECO:0007669"/>
    <property type="project" value="TreeGrafter"/>
</dbReference>
<dbReference type="GO" id="GO:0015031">
    <property type="term" value="P:protein transport"/>
    <property type="evidence" value="ECO:0007669"/>
    <property type="project" value="UniProtKB-KW"/>
</dbReference>
<dbReference type="CDD" id="cd20070">
    <property type="entry name" value="5TM_YidC_Alb3"/>
    <property type="match status" value="1"/>
</dbReference>
<dbReference type="CDD" id="cd19961">
    <property type="entry name" value="EcYidC-like_peri"/>
    <property type="match status" value="1"/>
</dbReference>
<dbReference type="FunFam" id="2.70.98.90:FF:000002">
    <property type="entry name" value="Membrane protein insertase YidC"/>
    <property type="match status" value="1"/>
</dbReference>
<dbReference type="Gene3D" id="2.70.98.90">
    <property type="match status" value="1"/>
</dbReference>
<dbReference type="HAMAP" id="MF_01810">
    <property type="entry name" value="YidC_type1"/>
    <property type="match status" value="1"/>
</dbReference>
<dbReference type="InterPro" id="IPR019998">
    <property type="entry name" value="Membr_insert_YidC"/>
</dbReference>
<dbReference type="InterPro" id="IPR028053">
    <property type="entry name" value="Membr_insert_YidC_N"/>
</dbReference>
<dbReference type="InterPro" id="IPR001708">
    <property type="entry name" value="YidC/ALB3/OXA1/COX18"/>
</dbReference>
<dbReference type="InterPro" id="IPR028055">
    <property type="entry name" value="YidC/Oxa/ALB_C"/>
</dbReference>
<dbReference type="InterPro" id="IPR047196">
    <property type="entry name" value="YidC_ALB_C"/>
</dbReference>
<dbReference type="InterPro" id="IPR038221">
    <property type="entry name" value="YidC_periplasmic_sf"/>
</dbReference>
<dbReference type="NCBIfam" id="NF002352">
    <property type="entry name" value="PRK01318.1-3"/>
    <property type="match status" value="1"/>
</dbReference>
<dbReference type="NCBIfam" id="TIGR03593">
    <property type="entry name" value="yidC_nterm"/>
    <property type="match status" value="1"/>
</dbReference>
<dbReference type="NCBIfam" id="TIGR03592">
    <property type="entry name" value="yidC_oxa1_cterm"/>
    <property type="match status" value="1"/>
</dbReference>
<dbReference type="PANTHER" id="PTHR12428:SF65">
    <property type="entry name" value="CYTOCHROME C OXIDASE ASSEMBLY PROTEIN COX18, MITOCHONDRIAL"/>
    <property type="match status" value="1"/>
</dbReference>
<dbReference type="PANTHER" id="PTHR12428">
    <property type="entry name" value="OXA1"/>
    <property type="match status" value="1"/>
</dbReference>
<dbReference type="Pfam" id="PF02096">
    <property type="entry name" value="60KD_IMP"/>
    <property type="match status" value="1"/>
</dbReference>
<dbReference type="Pfam" id="PF14849">
    <property type="entry name" value="YidC_periplas"/>
    <property type="match status" value="1"/>
</dbReference>
<dbReference type="PRINTS" id="PR00701">
    <property type="entry name" value="60KDINNERMP"/>
</dbReference>
<dbReference type="PRINTS" id="PR01900">
    <property type="entry name" value="YIDCPROTEIN"/>
</dbReference>
<proteinExistence type="inferred from homology"/>
<accession>Q8PEH7</accession>
<comment type="function">
    <text evidence="1">Required for the insertion and/or proper folding and/or complex formation of integral membrane proteins into the membrane. Involved in integration of membrane proteins that insert both dependently and independently of the Sec translocase complex, as well as at least some lipoproteins. Aids folding of multispanning membrane proteins.</text>
</comment>
<comment type="subunit">
    <text evidence="1">Interacts with the Sec translocase complex via SecD. Specifically interacts with transmembrane segments of nascent integral membrane proteins during membrane integration.</text>
</comment>
<comment type="subcellular location">
    <subcellularLocation>
        <location evidence="1">Cell inner membrane</location>
        <topology evidence="1">Multi-pass membrane protein</topology>
    </subcellularLocation>
</comment>
<comment type="similarity">
    <text evidence="1">Belongs to the OXA1/ALB3/YidC family. Type 1 subfamily.</text>
</comment>
<gene>
    <name evidence="1" type="primary">yidC</name>
    <name type="ordered locus">XAC4372</name>
</gene>
<sequence>MNQTRVFLIFAWLMVAALLWMEWGKDKAAANAPVVAATQSVPAARDLDAATPSAANVPAAQAIPQAGAPGAVPATSTTAATPAAAGAAPVVTLTSDVLRLKLDGRSVLDAELLQFPQTKDGTAPVSLLTEDPAHPYNATSGWASEHSPVPGVGGFRAEQPGTTFDMAKGQNTLVVPFVWNGPDGVSIRRTFTLERGRYAISIKDEVINKSGAPWNGYVFRKLSRVPTILSRGMTNPDSFSFNGATWYSPQEGYERRAFKDYMDDGGLNRQITGGWVALLQHHFFTAWIPQKDQASLYVLAQDGPRDVAELRGPAFTVAPGQTASTEARLWVGPKLVSLIAKEDVKGLDRVVDYSRFSIMAIIGQGLFWVLSHLHSFLHNWGWAIIGLVVLLRLALYPLSAAQYKSGAKMRRFQPRLAQLKERYGDDRVKYQQATMELFKKEKINPMGGCLPLLIQMPIFFALYWVLVESVELRQAPWLGWIQDLTARDPYFILPLLNISIMWATQKLTPTPGMDPMQAKMMQFMPLVFGVMMAFMPAGLVLYWVVNGGLGLLIQWWMIRQHGEKPSKIIQANAK</sequence>
<evidence type="ECO:0000255" key="1">
    <source>
        <dbReference type="HAMAP-Rule" id="MF_01810"/>
    </source>
</evidence>
<reference key="1">
    <citation type="journal article" date="2002" name="Nature">
        <title>Comparison of the genomes of two Xanthomonas pathogens with differing host specificities.</title>
        <authorList>
            <person name="da Silva A.C.R."/>
            <person name="Ferro J.A."/>
            <person name="Reinach F.C."/>
            <person name="Farah C.S."/>
            <person name="Furlan L.R."/>
            <person name="Quaggio R.B."/>
            <person name="Monteiro-Vitorello C.B."/>
            <person name="Van Sluys M.A."/>
            <person name="Almeida N.F. Jr."/>
            <person name="Alves L.M.C."/>
            <person name="do Amaral A.M."/>
            <person name="Bertolini M.C."/>
            <person name="Camargo L.E.A."/>
            <person name="Camarotte G."/>
            <person name="Cannavan F."/>
            <person name="Cardozo J."/>
            <person name="Chambergo F."/>
            <person name="Ciapina L.P."/>
            <person name="Cicarelli R.M.B."/>
            <person name="Coutinho L.L."/>
            <person name="Cursino-Santos J.R."/>
            <person name="El-Dorry H."/>
            <person name="Faria J.B."/>
            <person name="Ferreira A.J.S."/>
            <person name="Ferreira R.C.C."/>
            <person name="Ferro M.I.T."/>
            <person name="Formighieri E.F."/>
            <person name="Franco M.C."/>
            <person name="Greggio C.C."/>
            <person name="Gruber A."/>
            <person name="Katsuyama A.M."/>
            <person name="Kishi L.T."/>
            <person name="Leite R.P."/>
            <person name="Lemos E.G.M."/>
            <person name="Lemos M.V.F."/>
            <person name="Locali E.C."/>
            <person name="Machado M.A."/>
            <person name="Madeira A.M.B.N."/>
            <person name="Martinez-Rossi N.M."/>
            <person name="Martins E.C."/>
            <person name="Meidanis J."/>
            <person name="Menck C.F.M."/>
            <person name="Miyaki C.Y."/>
            <person name="Moon D.H."/>
            <person name="Moreira L.M."/>
            <person name="Novo M.T.M."/>
            <person name="Okura V.K."/>
            <person name="Oliveira M.C."/>
            <person name="Oliveira V.R."/>
            <person name="Pereira H.A."/>
            <person name="Rossi A."/>
            <person name="Sena J.A.D."/>
            <person name="Silva C."/>
            <person name="de Souza R.F."/>
            <person name="Spinola L.A.F."/>
            <person name="Takita M.A."/>
            <person name="Tamura R.E."/>
            <person name="Teixeira E.C."/>
            <person name="Tezza R.I.D."/>
            <person name="Trindade dos Santos M."/>
            <person name="Truffi D."/>
            <person name="Tsai S.M."/>
            <person name="White F.F."/>
            <person name="Setubal J.C."/>
            <person name="Kitajima J.P."/>
        </authorList>
    </citation>
    <scope>NUCLEOTIDE SEQUENCE [LARGE SCALE GENOMIC DNA]</scope>
    <source>
        <strain>306</strain>
    </source>
</reference>
<protein>
    <recommendedName>
        <fullName evidence="1">Membrane protein insertase YidC</fullName>
    </recommendedName>
    <alternativeName>
        <fullName evidence="1">Foldase YidC</fullName>
    </alternativeName>
    <alternativeName>
        <fullName evidence="1">Membrane integrase YidC</fullName>
    </alternativeName>
    <alternativeName>
        <fullName evidence="1">Membrane protein YidC</fullName>
    </alternativeName>
</protein>
<organism>
    <name type="scientific">Xanthomonas axonopodis pv. citri (strain 306)</name>
    <dbReference type="NCBI Taxonomy" id="190486"/>
    <lineage>
        <taxon>Bacteria</taxon>
        <taxon>Pseudomonadati</taxon>
        <taxon>Pseudomonadota</taxon>
        <taxon>Gammaproteobacteria</taxon>
        <taxon>Lysobacterales</taxon>
        <taxon>Lysobacteraceae</taxon>
        <taxon>Xanthomonas</taxon>
    </lineage>
</organism>
<name>YIDC_XANAC</name>